<reference key="1">
    <citation type="journal article" date="1998" name="Science">
        <title>Genome sequence of the nematode C. elegans: a platform for investigating biology.</title>
        <authorList>
            <consortium name="The C. elegans sequencing consortium"/>
        </authorList>
    </citation>
    <scope>NUCLEOTIDE SEQUENCE [LARGE SCALE GENOMIC DNA]</scope>
    <source>
        <strain>Bristol N2</strain>
    </source>
</reference>
<reference key="2">
    <citation type="journal article" date="2002" name="EMBO J.">
        <title>The C. elegans ric-3 gene is required for maturation of nicotinic acetylcholine receptors.</title>
        <authorList>
            <person name="Halevi S."/>
            <person name="McKay J."/>
            <person name="Palfreyman M."/>
            <person name="Yassin L."/>
            <person name="Eshel M."/>
            <person name="Jorgensen E."/>
            <person name="Treinin M."/>
        </authorList>
    </citation>
    <scope>FUNCTION</scope>
    <scope>TISSUE SPECIFICITY</scope>
    <scope>SUBCELLULAR LOCATION</scope>
</reference>
<reference key="3">
    <citation type="journal article" date="2005" name="J. Biol. Chem.">
        <title>RIC-3 affects properties and quantity of nicotinic acetylcholine receptors via a mechanism that does not require the coiled-coil domains.</title>
        <authorList>
            <person name="Ben-Ami H.C."/>
            <person name="Yassin L."/>
            <person name="Farah H."/>
            <person name="Michaeli A."/>
            <person name="Eshel M."/>
            <person name="Treinin M."/>
        </authorList>
    </citation>
    <scope>FUNCTION</scope>
    <scope>INTERACTION WITH DEG-3</scope>
</reference>
<reference key="4">
    <citation type="journal article" date="2006" name="J. Neurosci. Methods">
        <title>Visualization of integral and peripheral cell surface proteins in live Caenorhabditis elegans.</title>
        <authorList>
            <person name="Gottschalk A."/>
            <person name="Schafer W.R."/>
        </authorList>
    </citation>
    <scope>FUNCTION</scope>
</reference>
<organism>
    <name type="scientific">Caenorhabditis elegans</name>
    <dbReference type="NCBI Taxonomy" id="6239"/>
    <lineage>
        <taxon>Eukaryota</taxon>
        <taxon>Metazoa</taxon>
        <taxon>Ecdysozoa</taxon>
        <taxon>Nematoda</taxon>
        <taxon>Chromadorea</taxon>
        <taxon>Rhabditida</taxon>
        <taxon>Rhabditina</taxon>
        <taxon>Rhabditomorpha</taxon>
        <taxon>Rhabditoidea</taxon>
        <taxon>Rhabditidae</taxon>
        <taxon>Peloderinae</taxon>
        <taxon>Caenorhabditis</taxon>
    </lineage>
</organism>
<comment type="function">
    <text evidence="3 4 5">Required for maturation and cell surface expression of acetylcholine receptors.</text>
</comment>
<comment type="subunit">
    <text evidence="4">Interacts with the deg-3/des-2 acetylcholine receptor.</text>
</comment>
<comment type="subcellular location">
    <subcellularLocation>
        <location evidence="7">Endoplasmic reticulum membrane</location>
        <topology evidence="7">Multi-pass membrane protein</topology>
    </subcellularLocation>
</comment>
<comment type="tissue specificity">
    <text evidence="3">Expressed in pharyngeal muscles, body wall muscles and in most neurons.</text>
</comment>
<comment type="similarity">
    <text evidence="6">Belongs to the ric-3 family.</text>
</comment>
<name>RIC3_CAEEL</name>
<sequence length="378" mass="43112">MPKTERRRDRDRDRDRERRNRRKRDDSYDDYDEEGGISGWKLGLVFGVIVVCFAMLYPTLFHPMLMGFLGRSPPSSPSINQQRPPIHPAMGGGSGQRHPGGGADVHPAMRMAQAQAESQSGGSKGMFTWMLPVYTIGVVLFLLYTLFKSKGKKSKRKKRNYFDSEDDDDESESETKYGGKFGKKKLEGLQKRLRETESAMSKILEQLESVQAGANPVDLDAADKRSEQLEEDPSVKEAVGLTETNEQYIKDLEVALKEFQSLSKEYDKAKMKKLKRKDSSSDEDEEDEEENSSELSEIEEEEEEVKPVKKSKSSSQSVGKRKNRPKSTSEEEDEGEEESRKVAEDAEEEGIDIDSEIREHAEKEKKDKNVRRRRPKKT</sequence>
<feature type="chain" id="PRO_0000302735" description="Resistance to inhibitors of cholinesterase protein 3">
    <location>
        <begin position="1"/>
        <end position="378"/>
    </location>
</feature>
<feature type="transmembrane region" description="Helical" evidence="1">
    <location>
        <begin position="42"/>
        <end position="62"/>
    </location>
</feature>
<feature type="transmembrane region" description="Helical" evidence="1">
    <location>
        <begin position="127"/>
        <end position="147"/>
    </location>
</feature>
<feature type="region of interest" description="Disordered" evidence="2">
    <location>
        <begin position="1"/>
        <end position="32"/>
    </location>
</feature>
<feature type="region of interest" description="Sufficient for function in acetylcholine receptor folding">
    <location>
        <begin position="35"/>
        <end position="152"/>
    </location>
</feature>
<feature type="region of interest" description="Disordered" evidence="2">
    <location>
        <begin position="74"/>
        <end position="105"/>
    </location>
</feature>
<feature type="region of interest" description="Disordered" evidence="2">
    <location>
        <begin position="155"/>
        <end position="179"/>
    </location>
</feature>
<feature type="region of interest" description="Disordered" evidence="2">
    <location>
        <begin position="207"/>
        <end position="246"/>
    </location>
</feature>
<feature type="region of interest" description="Disordered" evidence="2">
    <location>
        <begin position="267"/>
        <end position="378"/>
    </location>
</feature>
<feature type="coiled-coil region" evidence="1">
    <location>
        <begin position="180"/>
        <end position="212"/>
    </location>
</feature>
<feature type="compositionally biased region" description="Basic and acidic residues" evidence="2">
    <location>
        <begin position="1"/>
        <end position="26"/>
    </location>
</feature>
<feature type="compositionally biased region" description="Gly residues" evidence="2">
    <location>
        <begin position="90"/>
        <end position="103"/>
    </location>
</feature>
<feature type="compositionally biased region" description="Acidic residues" evidence="2">
    <location>
        <begin position="163"/>
        <end position="172"/>
    </location>
</feature>
<feature type="compositionally biased region" description="Acidic residues" evidence="2">
    <location>
        <begin position="281"/>
        <end position="304"/>
    </location>
</feature>
<feature type="compositionally biased region" description="Acidic residues" evidence="2">
    <location>
        <begin position="345"/>
        <end position="354"/>
    </location>
</feature>
<feature type="compositionally biased region" description="Basic and acidic residues" evidence="2">
    <location>
        <begin position="355"/>
        <end position="367"/>
    </location>
</feature>
<feature type="compositionally biased region" description="Basic residues" evidence="2">
    <location>
        <begin position="368"/>
        <end position="378"/>
    </location>
</feature>
<accession>Q22472</accession>
<proteinExistence type="evidence at protein level"/>
<gene>
    <name type="primary">ric-3</name>
    <name type="synonym">des-5</name>
    <name type="ORF">T14A8.1</name>
</gene>
<evidence type="ECO:0000255" key="1"/>
<evidence type="ECO:0000256" key="2">
    <source>
        <dbReference type="SAM" id="MobiDB-lite"/>
    </source>
</evidence>
<evidence type="ECO:0000269" key="3">
    <source>
    </source>
</evidence>
<evidence type="ECO:0000269" key="4">
    <source>
    </source>
</evidence>
<evidence type="ECO:0000269" key="5">
    <source>
    </source>
</evidence>
<evidence type="ECO:0000305" key="6"/>
<evidence type="ECO:0000305" key="7">
    <source>
    </source>
</evidence>
<dbReference type="EMBL" id="FO080379">
    <property type="protein sequence ID" value="CCD63313.1"/>
    <property type="molecule type" value="Genomic_DNA"/>
</dbReference>
<dbReference type="PIR" id="T16872">
    <property type="entry name" value="T16872"/>
</dbReference>
<dbReference type="RefSeq" id="NP_501299.1">
    <property type="nucleotide sequence ID" value="NM_068898.7"/>
</dbReference>
<dbReference type="SMR" id="Q22472"/>
<dbReference type="BioGRID" id="42687">
    <property type="interactions" value="4"/>
</dbReference>
<dbReference type="FunCoup" id="Q22472">
    <property type="interactions" value="82"/>
</dbReference>
<dbReference type="IntAct" id="Q22472">
    <property type="interactions" value="1"/>
</dbReference>
<dbReference type="STRING" id="6239.T14A8.1.1"/>
<dbReference type="iPTMnet" id="Q22472"/>
<dbReference type="PaxDb" id="6239-T14A8.1"/>
<dbReference type="PeptideAtlas" id="Q22472"/>
<dbReference type="EnsemblMetazoa" id="T14A8.1.1">
    <property type="protein sequence ID" value="T14A8.1.1"/>
    <property type="gene ID" value="WBGene00004363"/>
</dbReference>
<dbReference type="GeneID" id="177570"/>
<dbReference type="KEGG" id="cel:CELE_T14A8.1"/>
<dbReference type="UCSC" id="T14A8.1">
    <property type="organism name" value="c. elegans"/>
</dbReference>
<dbReference type="AGR" id="WB:WBGene00004363"/>
<dbReference type="CTD" id="37384"/>
<dbReference type="WormBase" id="T14A8.1">
    <property type="protein sequence ID" value="CE27448"/>
    <property type="gene ID" value="WBGene00004363"/>
    <property type="gene designation" value="ric-3"/>
</dbReference>
<dbReference type="eggNOG" id="KOG4808">
    <property type="taxonomic scope" value="Eukaryota"/>
</dbReference>
<dbReference type="GeneTree" id="ENSGT00440000034107"/>
<dbReference type="HOGENOM" id="CLU_732029_0_0_1"/>
<dbReference type="InParanoid" id="Q22472"/>
<dbReference type="OMA" id="IMYRIFL"/>
<dbReference type="OrthoDB" id="10070774at2759"/>
<dbReference type="PRO" id="PR:Q22472"/>
<dbReference type="Proteomes" id="UP000001940">
    <property type="component" value="Chromosome IV"/>
</dbReference>
<dbReference type="Bgee" id="WBGene00004363">
    <property type="expression patterns" value="Expressed in pharyngeal muscle cell (C elegans) and 3 other cell types or tissues"/>
</dbReference>
<dbReference type="GO" id="GO:0005783">
    <property type="term" value="C:endoplasmic reticulum"/>
    <property type="evidence" value="ECO:0000250"/>
    <property type="project" value="WormBase"/>
</dbReference>
<dbReference type="GO" id="GO:0005789">
    <property type="term" value="C:endoplasmic reticulum membrane"/>
    <property type="evidence" value="ECO:0007669"/>
    <property type="project" value="UniProtKB-SubCell"/>
</dbReference>
<dbReference type="GO" id="GO:0043231">
    <property type="term" value="C:intracellular membrane-bounded organelle"/>
    <property type="evidence" value="ECO:0000314"/>
    <property type="project" value="WormBase"/>
</dbReference>
<dbReference type="GO" id="GO:0043005">
    <property type="term" value="C:neuron projection"/>
    <property type="evidence" value="ECO:0000314"/>
    <property type="project" value="WormBase"/>
</dbReference>
<dbReference type="GO" id="GO:0043025">
    <property type="term" value="C:neuronal cell body"/>
    <property type="evidence" value="ECO:0000314"/>
    <property type="project" value="WormBase"/>
</dbReference>
<dbReference type="GO" id="GO:0045202">
    <property type="term" value="C:synapse"/>
    <property type="evidence" value="ECO:0007669"/>
    <property type="project" value="GOC"/>
</dbReference>
<dbReference type="GO" id="GO:0044183">
    <property type="term" value="F:protein folding chaperone"/>
    <property type="evidence" value="ECO:0000314"/>
    <property type="project" value="DisProt"/>
</dbReference>
<dbReference type="GO" id="GO:0032224">
    <property type="term" value="P:positive regulation of synaptic transmission, cholinergic"/>
    <property type="evidence" value="ECO:0000314"/>
    <property type="project" value="WormBase"/>
</dbReference>
<dbReference type="GO" id="GO:0034394">
    <property type="term" value="P:protein localization to cell surface"/>
    <property type="evidence" value="ECO:0000315"/>
    <property type="project" value="WormBase"/>
</dbReference>
<dbReference type="GO" id="GO:0006937">
    <property type="term" value="P:regulation of muscle contraction"/>
    <property type="evidence" value="ECO:0000316"/>
    <property type="project" value="UniProtKB"/>
</dbReference>
<dbReference type="GO" id="GO:0007271">
    <property type="term" value="P:synaptic transmission, cholinergic"/>
    <property type="evidence" value="ECO:0000315"/>
    <property type="project" value="WormBase"/>
</dbReference>
<dbReference type="DisProt" id="DP00613"/>
<dbReference type="InterPro" id="IPR026160">
    <property type="entry name" value="Ric3"/>
</dbReference>
<dbReference type="InterPro" id="IPR032763">
    <property type="entry name" value="RIC3_N"/>
</dbReference>
<dbReference type="PANTHER" id="PTHR21723:SF3">
    <property type="entry name" value="PROTEIN RIC-3"/>
    <property type="match status" value="1"/>
</dbReference>
<dbReference type="PANTHER" id="PTHR21723">
    <property type="entry name" value="RESISTANCE TO INHIBITORS OF CHOLINESTERASE PROTEIN 3 RIC3"/>
    <property type="match status" value="1"/>
</dbReference>
<dbReference type="Pfam" id="PF15361">
    <property type="entry name" value="RIC3"/>
    <property type="match status" value="1"/>
</dbReference>
<keyword id="KW-0175">Coiled coil</keyword>
<keyword id="KW-0256">Endoplasmic reticulum</keyword>
<keyword id="KW-0472">Membrane</keyword>
<keyword id="KW-1185">Reference proteome</keyword>
<keyword id="KW-0812">Transmembrane</keyword>
<keyword id="KW-1133">Transmembrane helix</keyword>
<protein>
    <recommendedName>
        <fullName>Resistance to inhibitors of cholinesterase protein 3</fullName>
    </recommendedName>
</protein>